<dbReference type="EMBL" id="AE013598">
    <property type="protein sequence ID" value="AAW76216.1"/>
    <property type="molecule type" value="Genomic_DNA"/>
</dbReference>
<dbReference type="SMR" id="Q5GYK5"/>
<dbReference type="STRING" id="291331.XOO2962"/>
<dbReference type="KEGG" id="xoo:XOO2962"/>
<dbReference type="HOGENOM" id="CLU_134863_5_0_6"/>
<dbReference type="Proteomes" id="UP000006735">
    <property type="component" value="Chromosome"/>
</dbReference>
<dbReference type="GO" id="GO:0032153">
    <property type="term" value="C:cell division site"/>
    <property type="evidence" value="ECO:0007669"/>
    <property type="project" value="UniProtKB-UniRule"/>
</dbReference>
<dbReference type="GO" id="GO:0030428">
    <property type="term" value="C:cell septum"/>
    <property type="evidence" value="ECO:0007669"/>
    <property type="project" value="TreeGrafter"/>
</dbReference>
<dbReference type="GO" id="GO:0005886">
    <property type="term" value="C:plasma membrane"/>
    <property type="evidence" value="ECO:0007669"/>
    <property type="project" value="UniProtKB-SubCell"/>
</dbReference>
<dbReference type="GO" id="GO:0043093">
    <property type="term" value="P:FtsZ-dependent cytokinesis"/>
    <property type="evidence" value="ECO:0007669"/>
    <property type="project" value="UniProtKB-UniRule"/>
</dbReference>
<dbReference type="HAMAP" id="MF_00599">
    <property type="entry name" value="FtsB"/>
    <property type="match status" value="1"/>
</dbReference>
<dbReference type="InterPro" id="IPR023081">
    <property type="entry name" value="Cell_div_FtsB"/>
</dbReference>
<dbReference type="InterPro" id="IPR007060">
    <property type="entry name" value="FtsL/DivIC"/>
</dbReference>
<dbReference type="NCBIfam" id="NF002058">
    <property type="entry name" value="PRK00888.1"/>
    <property type="match status" value="1"/>
</dbReference>
<dbReference type="PANTHER" id="PTHR37485">
    <property type="entry name" value="CELL DIVISION PROTEIN FTSB"/>
    <property type="match status" value="1"/>
</dbReference>
<dbReference type="PANTHER" id="PTHR37485:SF1">
    <property type="entry name" value="CELL DIVISION PROTEIN FTSB"/>
    <property type="match status" value="1"/>
</dbReference>
<dbReference type="Pfam" id="PF04977">
    <property type="entry name" value="DivIC"/>
    <property type="match status" value="1"/>
</dbReference>
<accession>Q5GYK5</accession>
<proteinExistence type="inferred from homology"/>
<keyword id="KW-0131">Cell cycle</keyword>
<keyword id="KW-0132">Cell division</keyword>
<keyword id="KW-0997">Cell inner membrane</keyword>
<keyword id="KW-1003">Cell membrane</keyword>
<keyword id="KW-0175">Coiled coil</keyword>
<keyword id="KW-0472">Membrane</keyword>
<keyword id="KW-1185">Reference proteome</keyword>
<keyword id="KW-0812">Transmembrane</keyword>
<keyword id="KW-1133">Transmembrane helix</keyword>
<name>FTSB_XANOR</name>
<gene>
    <name evidence="1" type="primary">ftsB</name>
    <name type="ordered locus">XOO2962</name>
</gene>
<protein>
    <recommendedName>
        <fullName evidence="1">Cell division protein FtsB</fullName>
    </recommendedName>
</protein>
<evidence type="ECO:0000255" key="1">
    <source>
        <dbReference type="HAMAP-Rule" id="MF_00599"/>
    </source>
</evidence>
<evidence type="ECO:0000256" key="2">
    <source>
        <dbReference type="SAM" id="MobiDB-lite"/>
    </source>
</evidence>
<comment type="function">
    <text evidence="1">Essential cell division protein. May link together the upstream cell division proteins, which are predominantly cytoplasmic, with the downstream cell division proteins, which are predominantly periplasmic.</text>
</comment>
<comment type="subunit">
    <text evidence="1">Part of a complex composed of FtsB, FtsL and FtsQ.</text>
</comment>
<comment type="subcellular location">
    <subcellularLocation>
        <location evidence="1">Cell inner membrane</location>
        <topology evidence="1">Single-pass type II membrane protein</topology>
    </subcellularLocation>
    <text evidence="1">Localizes to the division septum.</text>
</comment>
<comment type="similarity">
    <text evidence="1">Belongs to the FtsB family.</text>
</comment>
<feature type="chain" id="PRO_1000025738" description="Cell division protein FtsB">
    <location>
        <begin position="1"/>
        <end position="121"/>
    </location>
</feature>
<feature type="topological domain" description="Cytoplasmic" evidence="1">
    <location>
        <begin position="1"/>
        <end position="6"/>
    </location>
</feature>
<feature type="transmembrane region" description="Helical" evidence="1">
    <location>
        <begin position="7"/>
        <end position="24"/>
    </location>
</feature>
<feature type="topological domain" description="Periplasmic" evidence="1">
    <location>
        <begin position="25"/>
        <end position="121"/>
    </location>
</feature>
<feature type="region of interest" description="Disordered" evidence="2">
    <location>
        <begin position="94"/>
        <end position="121"/>
    </location>
</feature>
<feature type="coiled-coil region" evidence="1">
    <location>
        <begin position="31"/>
        <end position="66"/>
    </location>
</feature>
<feature type="compositionally biased region" description="Low complexity" evidence="2">
    <location>
        <begin position="101"/>
        <end position="121"/>
    </location>
</feature>
<reference key="1">
    <citation type="journal article" date="2005" name="Nucleic Acids Res.">
        <title>The genome sequence of Xanthomonas oryzae pathovar oryzae KACC10331, the bacterial blight pathogen of rice.</title>
        <authorList>
            <person name="Lee B.-M."/>
            <person name="Park Y.-J."/>
            <person name="Park D.-S."/>
            <person name="Kang H.-W."/>
            <person name="Kim J.-G."/>
            <person name="Song E.-S."/>
            <person name="Park I.-C."/>
            <person name="Yoon U.-H."/>
            <person name="Hahn J.-H."/>
            <person name="Koo B.-S."/>
            <person name="Lee G.-B."/>
            <person name="Kim H."/>
            <person name="Park H.-S."/>
            <person name="Yoon K.-O."/>
            <person name="Kim J.-H."/>
            <person name="Jung C.-H."/>
            <person name="Koh N.-H."/>
            <person name="Seo J.-S."/>
            <person name="Go S.-J."/>
        </authorList>
    </citation>
    <scope>NUCLEOTIDE SEQUENCE [LARGE SCALE GENOMIC DNA]</scope>
    <source>
        <strain>KACC10331 / KXO85</strain>
    </source>
</reference>
<sequence length="121" mass="13449">MRNWRWLLLVLAVLLAWLQYRFWFGPGNSGEVMMLEAQVAHQTQDNEGLRQRNQALAAEVKDLKDGEAAIEERARSELGMIKPGETFYRVVEDAPLPAPASPETAAPAQQAPASTDPVDHP</sequence>
<organism>
    <name type="scientific">Xanthomonas oryzae pv. oryzae (strain KACC10331 / KXO85)</name>
    <dbReference type="NCBI Taxonomy" id="291331"/>
    <lineage>
        <taxon>Bacteria</taxon>
        <taxon>Pseudomonadati</taxon>
        <taxon>Pseudomonadota</taxon>
        <taxon>Gammaproteobacteria</taxon>
        <taxon>Lysobacterales</taxon>
        <taxon>Lysobacteraceae</taxon>
        <taxon>Xanthomonas</taxon>
    </lineage>
</organism>